<feature type="chain" id="PRO_0000439211" description="Small ribosomal subunit protein uS14">
    <location>
        <begin position="1"/>
        <end position="61"/>
    </location>
</feature>
<feature type="binding site" evidence="1">
    <location>
        <position position="24"/>
    </location>
    <ligand>
        <name>Zn(2+)</name>
        <dbReference type="ChEBI" id="CHEBI:29105"/>
    </ligand>
</feature>
<feature type="binding site" evidence="1">
    <location>
        <position position="27"/>
    </location>
    <ligand>
        <name>Zn(2+)</name>
        <dbReference type="ChEBI" id="CHEBI:29105"/>
    </ligand>
</feature>
<feature type="binding site" evidence="1">
    <location>
        <position position="40"/>
    </location>
    <ligand>
        <name>Zn(2+)</name>
        <dbReference type="ChEBI" id="CHEBI:29105"/>
    </ligand>
</feature>
<feature type="binding site" evidence="1">
    <location>
        <position position="43"/>
    </location>
    <ligand>
        <name>Zn(2+)</name>
        <dbReference type="ChEBI" id="CHEBI:29105"/>
    </ligand>
</feature>
<organism>
    <name type="scientific">Thermus aquaticus</name>
    <dbReference type="NCBI Taxonomy" id="271"/>
    <lineage>
        <taxon>Bacteria</taxon>
        <taxon>Thermotogati</taxon>
        <taxon>Deinococcota</taxon>
        <taxon>Deinococci</taxon>
        <taxon>Thermales</taxon>
        <taxon>Thermaceae</taxon>
        <taxon>Thermus</taxon>
    </lineage>
</organism>
<reference key="1">
    <citation type="journal article" date="1991" name="Eur. J. Biochem.">
        <title>Analysis of the spc ribosomal protein operon of Thermus aquaticus.</title>
        <authorList>
            <person name="Jahn O."/>
            <person name="Hartmann R.K."/>
            <person name="Erdmann V.A."/>
        </authorList>
    </citation>
    <scope>NUCLEOTIDE SEQUENCE [GENOMIC DNA]</scope>
    <source>
        <strain>EP 00276</strain>
    </source>
</reference>
<reference key="2">
    <citation type="submission" date="2015-07" db="EMBL/GenBank/DDBJ databases">
        <authorList>
            <person name="Zylicz-Stachula A."/>
            <person name="Jezewska-Frackowiak J."/>
            <person name="Czajkowska E."/>
            <person name="Skowron P.M."/>
        </authorList>
    </citation>
    <scope>NUCLEOTIDE SEQUENCE [LARGE SCALE GENOMIC DNA]</scope>
    <source>
        <strain>ATCC 25104 / DSM 625 / JCM 10724 / NBRC 103206 / NCIMB 11243 / YT-1</strain>
    </source>
</reference>
<name>RS14Z_THEAQ</name>
<dbReference type="EMBL" id="X56552">
    <property type="protein sequence ID" value="CAA39897.1"/>
    <property type="molecule type" value="Genomic_DNA"/>
</dbReference>
<dbReference type="EMBL" id="LHCI01000106">
    <property type="protein sequence ID" value="KOX89850.1"/>
    <property type="molecule type" value="Genomic_DNA"/>
</dbReference>
<dbReference type="RefSeq" id="WP_003043922.1">
    <property type="nucleotide sequence ID" value="NZ_LHCI01000106.1"/>
</dbReference>
<dbReference type="SMR" id="A0A0N0BLP2"/>
<dbReference type="IntAct" id="A0A0N0BLP2">
    <property type="interactions" value="2"/>
</dbReference>
<dbReference type="PATRIC" id="fig|271.14.peg.1109"/>
<dbReference type="Proteomes" id="UP000037685">
    <property type="component" value="Unassembled WGS sequence"/>
</dbReference>
<dbReference type="GO" id="GO:0005737">
    <property type="term" value="C:cytoplasm"/>
    <property type="evidence" value="ECO:0007669"/>
    <property type="project" value="UniProtKB-ARBA"/>
</dbReference>
<dbReference type="GO" id="GO:0015935">
    <property type="term" value="C:small ribosomal subunit"/>
    <property type="evidence" value="ECO:0007669"/>
    <property type="project" value="TreeGrafter"/>
</dbReference>
<dbReference type="GO" id="GO:0019843">
    <property type="term" value="F:rRNA binding"/>
    <property type="evidence" value="ECO:0007669"/>
    <property type="project" value="UniProtKB-UniRule"/>
</dbReference>
<dbReference type="GO" id="GO:0003735">
    <property type="term" value="F:structural constituent of ribosome"/>
    <property type="evidence" value="ECO:0007669"/>
    <property type="project" value="InterPro"/>
</dbReference>
<dbReference type="GO" id="GO:0008270">
    <property type="term" value="F:zinc ion binding"/>
    <property type="evidence" value="ECO:0007669"/>
    <property type="project" value="UniProtKB-UniRule"/>
</dbReference>
<dbReference type="GO" id="GO:0006412">
    <property type="term" value="P:translation"/>
    <property type="evidence" value="ECO:0007669"/>
    <property type="project" value="UniProtKB-UniRule"/>
</dbReference>
<dbReference type="FunFam" id="4.10.830.10:FF:000001">
    <property type="entry name" value="30S ribosomal protein S14 type Z"/>
    <property type="match status" value="1"/>
</dbReference>
<dbReference type="Gene3D" id="4.10.830.10">
    <property type="entry name" value="30s Ribosomal Protein S14, Chain N"/>
    <property type="match status" value="1"/>
</dbReference>
<dbReference type="HAMAP" id="MF_01364_B">
    <property type="entry name" value="Ribosomal_uS14_2_B"/>
    <property type="match status" value="1"/>
</dbReference>
<dbReference type="InterPro" id="IPR001209">
    <property type="entry name" value="Ribosomal_uS14"/>
</dbReference>
<dbReference type="InterPro" id="IPR023053">
    <property type="entry name" value="Ribosomal_uS14_bact"/>
</dbReference>
<dbReference type="InterPro" id="IPR018271">
    <property type="entry name" value="Ribosomal_uS14_CS"/>
</dbReference>
<dbReference type="InterPro" id="IPR043140">
    <property type="entry name" value="Ribosomal_uS14_sf"/>
</dbReference>
<dbReference type="NCBIfam" id="NF005974">
    <property type="entry name" value="PRK08061.1"/>
    <property type="match status" value="1"/>
</dbReference>
<dbReference type="PANTHER" id="PTHR19836">
    <property type="entry name" value="30S RIBOSOMAL PROTEIN S14"/>
    <property type="match status" value="1"/>
</dbReference>
<dbReference type="PANTHER" id="PTHR19836:SF19">
    <property type="entry name" value="SMALL RIBOSOMAL SUBUNIT PROTEIN US14M"/>
    <property type="match status" value="1"/>
</dbReference>
<dbReference type="Pfam" id="PF00253">
    <property type="entry name" value="Ribosomal_S14"/>
    <property type="match status" value="1"/>
</dbReference>
<dbReference type="SUPFAM" id="SSF57716">
    <property type="entry name" value="Glucocorticoid receptor-like (DNA-binding domain)"/>
    <property type="match status" value="1"/>
</dbReference>
<dbReference type="PROSITE" id="PS00527">
    <property type="entry name" value="RIBOSOMAL_S14"/>
    <property type="match status" value="1"/>
</dbReference>
<keyword id="KW-0479">Metal-binding</keyword>
<keyword id="KW-0687">Ribonucleoprotein</keyword>
<keyword id="KW-0689">Ribosomal protein</keyword>
<keyword id="KW-0694">RNA-binding</keyword>
<keyword id="KW-0699">rRNA-binding</keyword>
<keyword id="KW-0862">Zinc</keyword>
<evidence type="ECO:0000255" key="1">
    <source>
        <dbReference type="HAMAP-Rule" id="MF_01364"/>
    </source>
</evidence>
<evidence type="ECO:0000305" key="2"/>
<gene>
    <name evidence="1" type="primary">rpsZ</name>
    <name evidence="1" type="synonym">rpsN</name>
    <name type="ORF">BVI061214_01033</name>
</gene>
<accession>A0A0N0BLP2</accession>
<accession>Q5SHQ1</accession>
<protein>
    <recommendedName>
        <fullName evidence="1">Small ribosomal subunit protein uS14</fullName>
    </recommendedName>
    <alternativeName>
        <fullName evidence="2">30S ribosomal protein S14 type Z</fullName>
    </alternativeName>
</protein>
<proteinExistence type="inferred from homology"/>
<comment type="function">
    <text evidence="1">Binds 16S rRNA, required for the assembly of 30S particles and may also be responsible for determining the conformation of the 16S rRNA at the A site.</text>
</comment>
<comment type="cofactor">
    <cofactor evidence="1">
        <name>Zn(2+)</name>
        <dbReference type="ChEBI" id="CHEBI:29105"/>
    </cofactor>
    <text evidence="1">Binds 1 zinc ion per subunit.</text>
</comment>
<comment type="subunit">
    <text evidence="1">Part of the 30S ribosomal subunit. Contacts proteins S3 and S10.</text>
</comment>
<comment type="similarity">
    <text evidence="1">Belongs to the universal ribosomal protein uS14 family. Zinc-binding uS14 subfamily.</text>
</comment>
<sequence>MARKALIEKAKRTPKFKVRAYTRCVRCGRARSVYRYFGLCRICLRELAHKGQLPGVKKASW</sequence>